<keyword id="KW-0021">Allosteric enzyme</keyword>
<keyword id="KW-0028">Amino-acid biosynthesis</keyword>
<keyword id="KW-0057">Aromatic amino acid biosynthesis</keyword>
<keyword id="KW-0963">Cytoplasm</keyword>
<keyword id="KW-0413">Isomerase</keyword>
<keyword id="KW-0456">Lyase</keyword>
<keyword id="KW-0511">Multifunctional enzyme</keyword>
<keyword id="KW-0584">Phenylalanine biosynthesis</keyword>
<keyword id="KW-1185">Reference proteome</keyword>
<accession>P57472</accession>
<accession>Q9L4J2</accession>
<organism>
    <name type="scientific">Buchnera aphidicola subsp. Acyrthosiphon pisum (strain APS)</name>
    <name type="common">Acyrthosiphon pisum symbiotic bacterium</name>
    <dbReference type="NCBI Taxonomy" id="107806"/>
    <lineage>
        <taxon>Bacteria</taxon>
        <taxon>Pseudomonadati</taxon>
        <taxon>Pseudomonadota</taxon>
        <taxon>Gammaproteobacteria</taxon>
        <taxon>Enterobacterales</taxon>
        <taxon>Erwiniaceae</taxon>
        <taxon>Buchnera</taxon>
    </lineage>
</organism>
<protein>
    <recommendedName>
        <fullName evidence="1">Bifunctional chorismate mutase/prephenate dehydratase</fullName>
    </recommendedName>
    <alternativeName>
        <fullName evidence="1">Chorismate mutase-prephenate dehydratase</fullName>
    </alternativeName>
    <alternativeName>
        <fullName evidence="1">P-protein</fullName>
    </alternativeName>
    <domain>
        <recommendedName>
            <fullName evidence="1">Chorismate mutase</fullName>
            <shortName evidence="1">CM</shortName>
            <ecNumber evidence="1">5.4.99.5</ecNumber>
        </recommendedName>
    </domain>
    <domain>
        <recommendedName>
            <fullName evidence="1">Prephenate dehydratase</fullName>
            <shortName evidence="1">PDT</shortName>
            <ecNumber evidence="1">4.2.1.51</ecNumber>
        </recommendedName>
    </domain>
</protein>
<name>CMPDT_BUCAI</name>
<proteinExistence type="inferred from homology"/>
<dbReference type="EC" id="5.4.99.5" evidence="1"/>
<dbReference type="EC" id="4.2.1.51" evidence="1"/>
<dbReference type="EMBL" id="AJ239043">
    <property type="protein sequence ID" value="CAB90996.1"/>
    <property type="molecule type" value="Genomic_DNA"/>
</dbReference>
<dbReference type="EMBL" id="BA000003">
    <property type="protein sequence ID" value="BAB13095.1"/>
    <property type="molecule type" value="Genomic_DNA"/>
</dbReference>
<dbReference type="RefSeq" id="NP_240209.1">
    <property type="nucleotide sequence ID" value="NC_002528.1"/>
</dbReference>
<dbReference type="RefSeq" id="WP_010896095.1">
    <property type="nucleotide sequence ID" value="NZ_AP036055.1"/>
</dbReference>
<dbReference type="SMR" id="P57472"/>
<dbReference type="STRING" id="563178.BUAP5A_385"/>
<dbReference type="EnsemblBacteria" id="BAB13095">
    <property type="protein sequence ID" value="BAB13095"/>
    <property type="gene ID" value="BAB13095"/>
</dbReference>
<dbReference type="KEGG" id="buc:BU392"/>
<dbReference type="PATRIC" id="fig|107806.10.peg.406"/>
<dbReference type="eggNOG" id="COG0077">
    <property type="taxonomic scope" value="Bacteria"/>
</dbReference>
<dbReference type="eggNOG" id="COG1605">
    <property type="taxonomic scope" value="Bacteria"/>
</dbReference>
<dbReference type="HOGENOM" id="CLU_035008_1_0_6"/>
<dbReference type="BRENDA" id="4.2.1.51">
    <property type="organism ID" value="1015"/>
</dbReference>
<dbReference type="UniPathway" id="UPA00120">
    <property type="reaction ID" value="UER00203"/>
</dbReference>
<dbReference type="UniPathway" id="UPA00121">
    <property type="reaction ID" value="UER00345"/>
</dbReference>
<dbReference type="Proteomes" id="UP000001806">
    <property type="component" value="Chromosome"/>
</dbReference>
<dbReference type="GO" id="GO:0005737">
    <property type="term" value="C:cytoplasm"/>
    <property type="evidence" value="ECO:0007669"/>
    <property type="project" value="UniProtKB-SubCell"/>
</dbReference>
<dbReference type="GO" id="GO:0004106">
    <property type="term" value="F:chorismate mutase activity"/>
    <property type="evidence" value="ECO:0007669"/>
    <property type="project" value="UniProtKB-EC"/>
</dbReference>
<dbReference type="GO" id="GO:0004664">
    <property type="term" value="F:prephenate dehydratase activity"/>
    <property type="evidence" value="ECO:0007669"/>
    <property type="project" value="UniProtKB-EC"/>
</dbReference>
<dbReference type="GO" id="GO:0046417">
    <property type="term" value="P:chorismate metabolic process"/>
    <property type="evidence" value="ECO:0007669"/>
    <property type="project" value="InterPro"/>
</dbReference>
<dbReference type="GO" id="GO:0009094">
    <property type="term" value="P:L-phenylalanine biosynthetic process"/>
    <property type="evidence" value="ECO:0007669"/>
    <property type="project" value="UniProtKB-UniPathway"/>
</dbReference>
<dbReference type="CDD" id="cd04905">
    <property type="entry name" value="ACT_CM-PDT"/>
    <property type="match status" value="1"/>
</dbReference>
<dbReference type="CDD" id="cd13631">
    <property type="entry name" value="PBP2_Ct-PDT_like"/>
    <property type="match status" value="1"/>
</dbReference>
<dbReference type="FunFam" id="3.40.190.10:FF:000034">
    <property type="entry name" value="Chorismate mutase/prephenate dehydratase"/>
    <property type="match status" value="1"/>
</dbReference>
<dbReference type="Gene3D" id="3.30.70.260">
    <property type="match status" value="1"/>
</dbReference>
<dbReference type="Gene3D" id="1.20.59.10">
    <property type="entry name" value="Chorismate mutase"/>
    <property type="match status" value="1"/>
</dbReference>
<dbReference type="Gene3D" id="3.40.190.10">
    <property type="entry name" value="Periplasmic binding protein-like II"/>
    <property type="match status" value="2"/>
</dbReference>
<dbReference type="InterPro" id="IPR045865">
    <property type="entry name" value="ACT-like_dom_sf"/>
</dbReference>
<dbReference type="InterPro" id="IPR002912">
    <property type="entry name" value="ACT_dom"/>
</dbReference>
<dbReference type="InterPro" id="IPR008242">
    <property type="entry name" value="Chor_mutase/pphenate_deHydtase"/>
</dbReference>
<dbReference type="InterPro" id="IPR036263">
    <property type="entry name" value="Chorismate_II_sf"/>
</dbReference>
<dbReference type="InterPro" id="IPR036979">
    <property type="entry name" value="CM_dom_sf"/>
</dbReference>
<dbReference type="InterPro" id="IPR002701">
    <property type="entry name" value="CM_II_prokaryot"/>
</dbReference>
<dbReference type="InterPro" id="IPR010952">
    <property type="entry name" value="CM_P_1"/>
</dbReference>
<dbReference type="InterPro" id="IPR001086">
    <property type="entry name" value="Preph_deHydtase"/>
</dbReference>
<dbReference type="InterPro" id="IPR018528">
    <property type="entry name" value="Preph_deHydtase_CS"/>
</dbReference>
<dbReference type="NCBIfam" id="TIGR01797">
    <property type="entry name" value="CM_P_1"/>
    <property type="match status" value="1"/>
</dbReference>
<dbReference type="PANTHER" id="PTHR21022">
    <property type="entry name" value="PREPHENATE DEHYDRATASE P PROTEIN"/>
    <property type="match status" value="1"/>
</dbReference>
<dbReference type="PANTHER" id="PTHR21022:SF19">
    <property type="entry name" value="PREPHENATE DEHYDRATASE-RELATED"/>
    <property type="match status" value="1"/>
</dbReference>
<dbReference type="Pfam" id="PF01817">
    <property type="entry name" value="CM_2"/>
    <property type="match status" value="1"/>
</dbReference>
<dbReference type="Pfam" id="PF00800">
    <property type="entry name" value="PDT"/>
    <property type="match status" value="1"/>
</dbReference>
<dbReference type="PIRSF" id="PIRSF001500">
    <property type="entry name" value="Chor_mut_pdt_Ppr"/>
    <property type="match status" value="1"/>
</dbReference>
<dbReference type="SMART" id="SM00830">
    <property type="entry name" value="CM_2"/>
    <property type="match status" value="1"/>
</dbReference>
<dbReference type="SUPFAM" id="SSF55021">
    <property type="entry name" value="ACT-like"/>
    <property type="match status" value="1"/>
</dbReference>
<dbReference type="SUPFAM" id="SSF48600">
    <property type="entry name" value="Chorismate mutase II"/>
    <property type="match status" value="1"/>
</dbReference>
<dbReference type="SUPFAM" id="SSF53850">
    <property type="entry name" value="Periplasmic binding protein-like II"/>
    <property type="match status" value="1"/>
</dbReference>
<dbReference type="PROSITE" id="PS51671">
    <property type="entry name" value="ACT"/>
    <property type="match status" value="1"/>
</dbReference>
<dbReference type="PROSITE" id="PS51168">
    <property type="entry name" value="CHORISMATE_MUT_2"/>
    <property type="match status" value="1"/>
</dbReference>
<dbReference type="PROSITE" id="PS00857">
    <property type="entry name" value="PREPHENATE_DEHYDR_1"/>
    <property type="match status" value="1"/>
</dbReference>
<dbReference type="PROSITE" id="PS51171">
    <property type="entry name" value="PREPHENATE_DEHYDR_3"/>
    <property type="match status" value="1"/>
</dbReference>
<feature type="chain" id="PRO_0000119182" description="Bifunctional chorismate mutase/prephenate dehydratase">
    <location>
        <begin position="1"/>
        <end position="385"/>
    </location>
</feature>
<feature type="domain" description="Chorismate mutase" evidence="3">
    <location>
        <begin position="1"/>
        <end position="92"/>
    </location>
</feature>
<feature type="domain" description="Prephenate dehydratase" evidence="4">
    <location>
        <begin position="105"/>
        <end position="285"/>
    </location>
</feature>
<feature type="domain" description="ACT" evidence="5">
    <location>
        <begin position="299"/>
        <end position="376"/>
    </location>
</feature>
<feature type="region of interest" description="Regulatory">
    <location>
        <begin position="286"/>
        <end position="385"/>
    </location>
</feature>
<feature type="binding site" evidence="1">
    <location>
        <position position="11"/>
    </location>
    <ligand>
        <name>substrate</name>
    </ligand>
</feature>
<feature type="binding site" evidence="1">
    <location>
        <position position="28"/>
    </location>
    <ligand>
        <name>substrate</name>
    </ligand>
</feature>
<feature type="binding site" evidence="1">
    <location>
        <position position="39"/>
    </location>
    <ligand>
        <name>substrate</name>
    </ligand>
</feature>
<feature type="binding site" evidence="1">
    <location>
        <position position="48"/>
    </location>
    <ligand>
        <name>substrate</name>
    </ligand>
</feature>
<feature type="binding site" evidence="1">
    <location>
        <position position="52"/>
    </location>
    <ligand>
        <name>substrate</name>
    </ligand>
</feature>
<feature type="binding site" evidence="1">
    <location>
        <position position="84"/>
    </location>
    <ligand>
        <name>substrate</name>
    </ligand>
</feature>
<feature type="binding site" evidence="1">
    <location>
        <position position="88"/>
    </location>
    <ligand>
        <name>substrate</name>
    </ligand>
</feature>
<feature type="site" description="Essential for prephenate dehydratase activity" evidence="2">
    <location>
        <position position="278"/>
    </location>
</feature>
<sequence>MPANNSLLIFRDEINNIDKKIVKLLAERKNLVFKIAQSKIENNQAIRDIEREKKMLQKLIFLGKKYNLKSEYITQLFQLIIEESVATQKKLLKKFCNHNKLIPANFSFLGPKGSYSHIAAYKYADLNFQKCITNECSTFEEVVLSVENNQSDYAVLPIENTCSGSINEVFDILKKTNLFIIGEINIFINHNLLTLKKIELNKIKTIYSHPQPFQQCSDFIKKFPEWKIKYTKSTADAMKKIKKYNDVTNAALGSEIGSKIYGLEILMKNLANKENNITRFILLNRNPKKISKNIPTTTTLIFTTGQEAGSLSKVLSILQEKKLIMKKLTSQKIYKNPWEEMFYIDIQVNLSSTLMQDALEKIKKITRFIKILGCYPSEKITPIAP</sequence>
<evidence type="ECO:0000250" key="1">
    <source>
        <dbReference type="UniProtKB" id="P0A9J8"/>
    </source>
</evidence>
<evidence type="ECO:0000255" key="2"/>
<evidence type="ECO:0000255" key="3">
    <source>
        <dbReference type="PROSITE-ProRule" id="PRU00515"/>
    </source>
</evidence>
<evidence type="ECO:0000255" key="4">
    <source>
        <dbReference type="PROSITE-ProRule" id="PRU00517"/>
    </source>
</evidence>
<evidence type="ECO:0000255" key="5">
    <source>
        <dbReference type="PROSITE-ProRule" id="PRU01007"/>
    </source>
</evidence>
<evidence type="ECO:0000269" key="6">
    <source>
    </source>
</evidence>
<reference key="1">
    <citation type="journal article" date="2000" name="J. Bacteriol.">
        <title>Prephenate dehydratase from the aphid endosymbiont (Buchnera) displays changes in the regulatory domain that suggest its desensitization to inhibition by phenylalanine.</title>
        <authorList>
            <person name="Jimenez N."/>
            <person name="Gonzalez-Candelas F."/>
            <person name="Silva F.J."/>
        </authorList>
    </citation>
    <scope>NUCLEOTIDE SEQUENCE [GENOMIC DNA]</scope>
    <scope>DOMAIN</scope>
</reference>
<reference key="2">
    <citation type="journal article" date="2000" name="Nature">
        <title>Genome sequence of the endocellular bacterial symbiont of aphids Buchnera sp. APS.</title>
        <authorList>
            <person name="Shigenobu S."/>
            <person name="Watanabe H."/>
            <person name="Hattori M."/>
            <person name="Sakaki Y."/>
            <person name="Ishikawa H."/>
        </authorList>
    </citation>
    <scope>NUCLEOTIDE SEQUENCE [LARGE SCALE GENOMIC DNA]</scope>
    <source>
        <strain>APS</strain>
    </source>
</reference>
<comment type="function">
    <text evidence="1">Catalyzes the Claisen rearrangement of chorismate to prephenate and the decarboxylation/dehydration of prephenate to phenylpyruvate.</text>
</comment>
<comment type="catalytic activity">
    <reaction evidence="1">
        <text>chorismate = prephenate</text>
        <dbReference type="Rhea" id="RHEA:13897"/>
        <dbReference type="ChEBI" id="CHEBI:29748"/>
        <dbReference type="ChEBI" id="CHEBI:29934"/>
        <dbReference type="EC" id="5.4.99.5"/>
    </reaction>
</comment>
<comment type="catalytic activity">
    <reaction evidence="1">
        <text>prephenate + H(+) = 3-phenylpyruvate + CO2 + H2O</text>
        <dbReference type="Rhea" id="RHEA:21648"/>
        <dbReference type="ChEBI" id="CHEBI:15377"/>
        <dbReference type="ChEBI" id="CHEBI:15378"/>
        <dbReference type="ChEBI" id="CHEBI:16526"/>
        <dbReference type="ChEBI" id="CHEBI:18005"/>
        <dbReference type="ChEBI" id="CHEBI:29934"/>
        <dbReference type="EC" id="4.2.1.51"/>
    </reaction>
</comment>
<comment type="pathway">
    <text evidence="1">Amino-acid biosynthesis; L-phenylalanine biosynthesis; phenylpyruvate from prephenate: step 1/1.</text>
</comment>
<comment type="pathway">
    <text evidence="1">Metabolic intermediate biosynthesis; prephenate biosynthesis; prephenate from chorismate: step 1/1.</text>
</comment>
<comment type="subcellular location">
    <subcellularLocation>
        <location evidence="1">Cytoplasm</location>
    </subcellularLocation>
</comment>
<comment type="domain">
    <text evidence="6">The regulatory domain shows changes in the ESRP sequence, which is involved in the allosteric binding of phenylalanine. These changes suggest the desensitization of the enzyme to inhibition by phenylalanine and would permit the overproduction of phenylalanine.</text>
</comment>
<gene>
    <name type="primary">pheA</name>
    <name type="synonym">aroQ/pheA</name>
    <name type="ordered locus">BU392</name>
</gene>